<evidence type="ECO:0000255" key="1">
    <source>
        <dbReference type="HAMAP-Rule" id="MF_00093"/>
    </source>
</evidence>
<dbReference type="EMBL" id="AP009179">
    <property type="protein sequence ID" value="BAF71023.1"/>
    <property type="molecule type" value="Genomic_DNA"/>
</dbReference>
<dbReference type="RefSeq" id="WP_011979756.1">
    <property type="nucleotide sequence ID" value="NC_009663.1"/>
</dbReference>
<dbReference type="SMR" id="A6Q6B4"/>
<dbReference type="STRING" id="387093.SUN_0063"/>
<dbReference type="KEGG" id="sun:SUN_0063"/>
<dbReference type="eggNOG" id="COG0216">
    <property type="taxonomic scope" value="Bacteria"/>
</dbReference>
<dbReference type="HOGENOM" id="CLU_036856_0_1_7"/>
<dbReference type="OrthoDB" id="9806673at2"/>
<dbReference type="Proteomes" id="UP000006378">
    <property type="component" value="Chromosome"/>
</dbReference>
<dbReference type="GO" id="GO:0005737">
    <property type="term" value="C:cytoplasm"/>
    <property type="evidence" value="ECO:0007669"/>
    <property type="project" value="UniProtKB-SubCell"/>
</dbReference>
<dbReference type="GO" id="GO:0016149">
    <property type="term" value="F:translation release factor activity, codon specific"/>
    <property type="evidence" value="ECO:0007669"/>
    <property type="project" value="UniProtKB-UniRule"/>
</dbReference>
<dbReference type="FunFam" id="3.30.160.20:FF:000004">
    <property type="entry name" value="Peptide chain release factor 1"/>
    <property type="match status" value="1"/>
</dbReference>
<dbReference type="FunFam" id="3.30.70.1660:FF:000002">
    <property type="entry name" value="Peptide chain release factor 1"/>
    <property type="match status" value="1"/>
</dbReference>
<dbReference type="Gene3D" id="3.30.160.20">
    <property type="match status" value="1"/>
</dbReference>
<dbReference type="Gene3D" id="3.30.70.1660">
    <property type="match status" value="2"/>
</dbReference>
<dbReference type="Gene3D" id="6.10.140.1950">
    <property type="match status" value="1"/>
</dbReference>
<dbReference type="HAMAP" id="MF_00093">
    <property type="entry name" value="Rel_fac_1"/>
    <property type="match status" value="1"/>
</dbReference>
<dbReference type="InterPro" id="IPR005139">
    <property type="entry name" value="PCRF"/>
</dbReference>
<dbReference type="InterPro" id="IPR000352">
    <property type="entry name" value="Pep_chain_release_fac_I"/>
</dbReference>
<dbReference type="InterPro" id="IPR045853">
    <property type="entry name" value="Pep_chain_release_fac_I_sf"/>
</dbReference>
<dbReference type="InterPro" id="IPR050057">
    <property type="entry name" value="Prokaryotic/Mito_RF"/>
</dbReference>
<dbReference type="InterPro" id="IPR004373">
    <property type="entry name" value="RF-1"/>
</dbReference>
<dbReference type="NCBIfam" id="TIGR00019">
    <property type="entry name" value="prfA"/>
    <property type="match status" value="1"/>
</dbReference>
<dbReference type="NCBIfam" id="NF001859">
    <property type="entry name" value="PRK00591.1"/>
    <property type="match status" value="1"/>
</dbReference>
<dbReference type="PANTHER" id="PTHR43804">
    <property type="entry name" value="LD18447P"/>
    <property type="match status" value="1"/>
</dbReference>
<dbReference type="PANTHER" id="PTHR43804:SF7">
    <property type="entry name" value="LD18447P"/>
    <property type="match status" value="1"/>
</dbReference>
<dbReference type="Pfam" id="PF03462">
    <property type="entry name" value="PCRF"/>
    <property type="match status" value="1"/>
</dbReference>
<dbReference type="Pfam" id="PF00472">
    <property type="entry name" value="RF-1"/>
    <property type="match status" value="1"/>
</dbReference>
<dbReference type="SMART" id="SM00937">
    <property type="entry name" value="PCRF"/>
    <property type="match status" value="1"/>
</dbReference>
<dbReference type="SUPFAM" id="SSF75620">
    <property type="entry name" value="Release factor"/>
    <property type="match status" value="1"/>
</dbReference>
<dbReference type="PROSITE" id="PS00745">
    <property type="entry name" value="RF_PROK_I"/>
    <property type="match status" value="1"/>
</dbReference>
<accession>A6Q6B4</accession>
<gene>
    <name evidence="1" type="primary">prfA</name>
    <name type="ordered locus">SUN_0063</name>
</gene>
<reference key="1">
    <citation type="journal article" date="2007" name="Proc. Natl. Acad. Sci. U.S.A.">
        <title>Deep-sea vent epsilon-proteobacterial genomes provide insights into emergence of pathogens.</title>
        <authorList>
            <person name="Nakagawa S."/>
            <person name="Takaki Y."/>
            <person name="Shimamura S."/>
            <person name="Reysenbach A.-L."/>
            <person name="Takai K."/>
            <person name="Horikoshi K."/>
        </authorList>
    </citation>
    <scope>NUCLEOTIDE SEQUENCE [LARGE SCALE GENOMIC DNA]</scope>
    <source>
        <strain>NBC37-1</strain>
    </source>
</reference>
<comment type="function">
    <text evidence="1">Peptide chain release factor 1 directs the termination of translation in response to the peptide chain termination codons UAG and UAA.</text>
</comment>
<comment type="subcellular location">
    <subcellularLocation>
        <location evidence="1">Cytoplasm</location>
    </subcellularLocation>
</comment>
<comment type="PTM">
    <text evidence="1">Methylated by PrmC. Methylation increases the termination efficiency of RF1.</text>
</comment>
<comment type="similarity">
    <text evidence="1">Belongs to the prokaryotic/mitochondrial release factor family.</text>
</comment>
<proteinExistence type="inferred from homology"/>
<protein>
    <recommendedName>
        <fullName evidence="1">Peptide chain release factor 1</fullName>
        <shortName evidence="1">RF-1</shortName>
    </recommendedName>
</protein>
<sequence>MFKEKLQPFIDRYNEISELLSSPDIASDINRMTELSKEQSGLAPLVEKANLYIETADAIAENKELLSDEELGDLAKEELSELEPMLPKLEEEIKILMIPKDKNDDKNIFLELRAGAGGDESALFVADVFRMYSRYAEQMGWKVEIVSTNDGTAGGYKELIAEIKGQGVYSQLKYEAGTHRVQRVPDTETQGRVHTSAITVAVIPEVDDVEVDIKPNEVKMDVYRSSGCGGQSVNTTDSAVRLTHIPTGIVVAIQDEKSQHKNRDKAMKVLKARVYESELQKQLDETAGQRKLQVGSGDRSEKIRTYNYPQNRLTDHRIGLTLYALDDVMNNGNLKLVIDPLIAHAQTEAIQEAGL</sequence>
<name>RF1_SULNB</name>
<keyword id="KW-0963">Cytoplasm</keyword>
<keyword id="KW-0488">Methylation</keyword>
<keyword id="KW-0648">Protein biosynthesis</keyword>
<organism>
    <name type="scientific">Sulfurovum sp. (strain NBC37-1)</name>
    <dbReference type="NCBI Taxonomy" id="387093"/>
    <lineage>
        <taxon>Bacteria</taxon>
        <taxon>Pseudomonadati</taxon>
        <taxon>Campylobacterota</taxon>
        <taxon>Epsilonproteobacteria</taxon>
        <taxon>Campylobacterales</taxon>
        <taxon>Sulfurovaceae</taxon>
        <taxon>Sulfurovum</taxon>
    </lineage>
</organism>
<feature type="chain" id="PRO_1000004961" description="Peptide chain release factor 1">
    <location>
        <begin position="1"/>
        <end position="355"/>
    </location>
</feature>
<feature type="modified residue" description="N5-methylglutamine" evidence="1">
    <location>
        <position position="231"/>
    </location>
</feature>